<accession>Q9SPV5</accession>
<feature type="signal peptide" evidence="1">
    <location>
        <begin position="1"/>
        <end position="32"/>
    </location>
</feature>
<feature type="chain" id="PRO_0000010841" description="Nectarin-1">
    <location>
        <begin position="33"/>
        <end position="229"/>
    </location>
</feature>
<feature type="domain" description="Cupin type-1" evidence="2">
    <location>
        <begin position="69"/>
        <end position="217"/>
    </location>
</feature>
<feature type="binding site" evidence="1">
    <location>
        <position position="117"/>
    </location>
    <ligand>
        <name>Mn(2+)</name>
        <dbReference type="ChEBI" id="CHEBI:29035"/>
    </ligand>
</feature>
<feature type="binding site" evidence="1">
    <location>
        <position position="119"/>
    </location>
    <ligand>
        <name>Mn(2+)</name>
        <dbReference type="ChEBI" id="CHEBI:29035"/>
    </ligand>
</feature>
<feature type="binding site" evidence="1">
    <location>
        <position position="124"/>
    </location>
    <ligand>
        <name>Mn(2+)</name>
        <dbReference type="ChEBI" id="CHEBI:29035"/>
    </ligand>
</feature>
<feature type="binding site" evidence="1">
    <location>
        <position position="163"/>
    </location>
    <ligand>
        <name>Mn(2+)</name>
        <dbReference type="ChEBI" id="CHEBI:29035"/>
    </ligand>
</feature>
<feature type="glycosylation site" description="N-linked (GlcNAc...) asparagine" evidence="2">
    <location>
        <position position="60"/>
    </location>
</feature>
<feature type="disulfide bond" evidence="1">
    <location>
        <begin position="42"/>
        <end position="57"/>
    </location>
</feature>
<reference key="1">
    <citation type="journal article" date="1999" name="Plant Mol. Biol.">
        <title>Nectarin I is a novel, soluble germin-like protein expressed in the nectar of Nicotiana sp.</title>
        <authorList>
            <person name="Carter C."/>
            <person name="Graham R.A."/>
            <person name="Thornburg R.W."/>
        </authorList>
    </citation>
    <scope>NUCLEOTIDE SEQUENCE [GENOMIC DNA]</scope>
    <scope>PROTEIN SEQUENCE OF 129-137</scope>
</reference>
<organism>
    <name type="scientific">Nicotiana plumbaginifolia</name>
    <name type="common">Leadwort-leaved tobacco</name>
    <name type="synonym">Tex-Mex tobacco</name>
    <dbReference type="NCBI Taxonomy" id="4092"/>
    <lineage>
        <taxon>Eukaryota</taxon>
        <taxon>Viridiplantae</taxon>
        <taxon>Streptophyta</taxon>
        <taxon>Embryophyta</taxon>
        <taxon>Tracheophyta</taxon>
        <taxon>Spermatophyta</taxon>
        <taxon>Magnoliopsida</taxon>
        <taxon>eudicotyledons</taxon>
        <taxon>Gunneridae</taxon>
        <taxon>Pentapetalae</taxon>
        <taxon>asterids</taxon>
        <taxon>lamiids</taxon>
        <taxon>Solanales</taxon>
        <taxon>Solanaceae</taxon>
        <taxon>Nicotianoideae</taxon>
        <taxon>Nicotianeae</taxon>
        <taxon>Nicotiana</taxon>
    </lineage>
</organism>
<keyword id="KW-0052">Apoplast</keyword>
<keyword id="KW-0903">Direct protein sequencing</keyword>
<keyword id="KW-1015">Disulfide bond</keyword>
<keyword id="KW-0325">Glycoprotein</keyword>
<keyword id="KW-0464">Manganese</keyword>
<keyword id="KW-0479">Metal-binding</keyword>
<keyword id="KW-0560">Oxidoreductase</keyword>
<keyword id="KW-0964">Secreted</keyword>
<keyword id="KW-0732">Signal</keyword>
<sequence>MAAFGIKSKIFQIMEMTILFLFAISIDRYCFAADEDMLQDVCVADLHSKVKVNGFPCKTNFTAADFSSFAISKPGATNNKFGSKVTTANVEQVPGLNTLGVSLARIDYAPGGINPPHTHPRASEMVFVMEGELDVGFITTANVLVSKQITKGEVFVFPRGLVHFQKNNGKIPAAVVSAFNSQLPGTQSIPITLFGASPTVPDDVLAQTFQINIEDVQQIKSKFAPAKKF</sequence>
<protein>
    <recommendedName>
        <fullName>Nectarin-1</fullName>
        <ecNumber>1.15.1.1</ecNumber>
    </recommendedName>
    <alternativeName>
        <fullName>Superoxide dismutase [Mn]</fullName>
    </alternativeName>
</protein>
<name>NEC1_NICPL</name>
<comment type="function">
    <text evidence="1">May interact with bacterial adhesins thereby protecting the reproductive tissues from microbial attack. Has no oxalate oxidase activity (By similarity).</text>
</comment>
<comment type="catalytic activity">
    <reaction>
        <text>2 superoxide + 2 H(+) = H2O2 + O2</text>
        <dbReference type="Rhea" id="RHEA:20696"/>
        <dbReference type="ChEBI" id="CHEBI:15378"/>
        <dbReference type="ChEBI" id="CHEBI:15379"/>
        <dbReference type="ChEBI" id="CHEBI:16240"/>
        <dbReference type="ChEBI" id="CHEBI:18421"/>
        <dbReference type="EC" id="1.15.1.1"/>
    </reaction>
</comment>
<comment type="cofactor">
    <cofactor evidence="1">
        <name>Mn(2+)</name>
        <dbReference type="ChEBI" id="CHEBI:29035"/>
    </cofactor>
    <text evidence="1">Binds 1 Mn(2+) ion per monomer.</text>
</comment>
<comment type="biophysicochemical properties">
    <temperatureDependence>
        <text>Highly thermostable.</text>
    </temperatureDependence>
</comment>
<comment type="subunit">
    <text evidence="1">Monomer. In the absence of manganese, it forms tetrameric and pentameric forms which show superoxide dismutase activity (By similarity).</text>
</comment>
<comment type="subcellular location">
    <subcellularLocation>
        <location evidence="1">Secreted</location>
        <location evidence="1">Extracellular space</location>
        <location evidence="1">Apoplast</location>
    </subcellularLocation>
    <text evidence="1">Secreted in the nectar.</text>
</comment>
<comment type="PTM">
    <text evidence="1">Glycosylated.</text>
</comment>
<comment type="similarity">
    <text evidence="3">Belongs to the germin family.</text>
</comment>
<evidence type="ECO:0000250" key="1"/>
<evidence type="ECO:0000255" key="2"/>
<evidence type="ECO:0000305" key="3"/>
<proteinExistence type="evidence at protein level"/>
<dbReference type="EC" id="1.15.1.1"/>
<dbReference type="EMBL" id="AF132671">
    <property type="protein sequence ID" value="AAF03355.1"/>
    <property type="molecule type" value="Genomic_DNA"/>
</dbReference>
<dbReference type="SMR" id="Q9SPV5"/>
<dbReference type="GlyCosmos" id="Q9SPV5">
    <property type="glycosylation" value="1 site, No reported glycans"/>
</dbReference>
<dbReference type="GO" id="GO:0048046">
    <property type="term" value="C:apoplast"/>
    <property type="evidence" value="ECO:0007669"/>
    <property type="project" value="UniProtKB-SubCell"/>
</dbReference>
<dbReference type="GO" id="GO:0030145">
    <property type="term" value="F:manganese ion binding"/>
    <property type="evidence" value="ECO:0007669"/>
    <property type="project" value="InterPro"/>
</dbReference>
<dbReference type="GO" id="GO:0004784">
    <property type="term" value="F:superoxide dismutase activity"/>
    <property type="evidence" value="ECO:0007669"/>
    <property type="project" value="UniProtKB-EC"/>
</dbReference>
<dbReference type="CDD" id="cd02241">
    <property type="entry name" value="cupin_OxOx"/>
    <property type="match status" value="1"/>
</dbReference>
<dbReference type="FunFam" id="2.60.120.10:FF:000025">
    <property type="entry name" value="germin-like protein subfamily 2 member 1"/>
    <property type="match status" value="1"/>
</dbReference>
<dbReference type="Gene3D" id="2.60.120.10">
    <property type="entry name" value="Jelly Rolls"/>
    <property type="match status" value="1"/>
</dbReference>
<dbReference type="InterPro" id="IPR006045">
    <property type="entry name" value="Cupin_1"/>
</dbReference>
<dbReference type="InterPro" id="IPR001929">
    <property type="entry name" value="Germin"/>
</dbReference>
<dbReference type="InterPro" id="IPR019780">
    <property type="entry name" value="Germin_Mn-BS"/>
</dbReference>
<dbReference type="InterPro" id="IPR014710">
    <property type="entry name" value="RmlC-like_jellyroll"/>
</dbReference>
<dbReference type="InterPro" id="IPR011051">
    <property type="entry name" value="RmlC_Cupin_sf"/>
</dbReference>
<dbReference type="PANTHER" id="PTHR31238">
    <property type="entry name" value="GERMIN-LIKE PROTEIN SUBFAMILY 3 MEMBER 3"/>
    <property type="match status" value="1"/>
</dbReference>
<dbReference type="Pfam" id="PF00190">
    <property type="entry name" value="Cupin_1"/>
    <property type="match status" value="1"/>
</dbReference>
<dbReference type="PRINTS" id="PR00325">
    <property type="entry name" value="GERMIN"/>
</dbReference>
<dbReference type="SMART" id="SM00835">
    <property type="entry name" value="Cupin_1"/>
    <property type="match status" value="1"/>
</dbReference>
<dbReference type="SUPFAM" id="SSF51182">
    <property type="entry name" value="RmlC-like cupins"/>
    <property type="match status" value="1"/>
</dbReference>
<dbReference type="PROSITE" id="PS00725">
    <property type="entry name" value="GERMIN"/>
    <property type="match status" value="1"/>
</dbReference>
<gene>
    <name type="primary">NEC1</name>
</gene>